<protein>
    <recommendedName>
        <fullName evidence="1">Glycine cleavage system H protein</fullName>
    </recommendedName>
</protein>
<gene>
    <name evidence="1" type="primary">gcvH</name>
    <name type="ordered locus">CT1626</name>
</gene>
<keyword id="KW-0450">Lipoyl</keyword>
<keyword id="KW-1185">Reference proteome</keyword>
<sequence>MNIPDNLRYTKDHEWIKLLEDGLTALVGITDFAQSELGDIVFVETKPVGTKVAAHGTFGTVEAVKTVADLFAPAAGEIVEVNAGLDDAAIVNSDPYNEGWIVKMKLDNPADVEALLSPADYSALIGE</sequence>
<proteinExistence type="inferred from homology"/>
<name>GCSH_CHLTE</name>
<feature type="chain" id="PRO_0000166214" description="Glycine cleavage system H protein">
    <location>
        <begin position="1"/>
        <end position="127"/>
    </location>
</feature>
<feature type="domain" description="Lipoyl-binding" evidence="2">
    <location>
        <begin position="24"/>
        <end position="105"/>
    </location>
</feature>
<feature type="modified residue" description="N6-lipoyllysine" evidence="1">
    <location>
        <position position="65"/>
    </location>
</feature>
<organism>
    <name type="scientific">Chlorobaculum tepidum (strain ATCC 49652 / DSM 12025 / NBRC 103806 / TLS)</name>
    <name type="common">Chlorobium tepidum</name>
    <dbReference type="NCBI Taxonomy" id="194439"/>
    <lineage>
        <taxon>Bacteria</taxon>
        <taxon>Pseudomonadati</taxon>
        <taxon>Chlorobiota</taxon>
        <taxon>Chlorobiia</taxon>
        <taxon>Chlorobiales</taxon>
        <taxon>Chlorobiaceae</taxon>
        <taxon>Chlorobaculum</taxon>
    </lineage>
</organism>
<evidence type="ECO:0000255" key="1">
    <source>
        <dbReference type="HAMAP-Rule" id="MF_00272"/>
    </source>
</evidence>
<evidence type="ECO:0000255" key="2">
    <source>
        <dbReference type="PROSITE-ProRule" id="PRU01066"/>
    </source>
</evidence>
<dbReference type="EMBL" id="AE006470">
    <property type="protein sequence ID" value="AAM72851.1"/>
    <property type="molecule type" value="Genomic_DNA"/>
</dbReference>
<dbReference type="RefSeq" id="NP_662509.1">
    <property type="nucleotide sequence ID" value="NC_002932.3"/>
</dbReference>
<dbReference type="RefSeq" id="WP_010933290.1">
    <property type="nucleotide sequence ID" value="NC_002932.3"/>
</dbReference>
<dbReference type="SMR" id="Q8KC04"/>
<dbReference type="STRING" id="194439.CT1626"/>
<dbReference type="EnsemblBacteria" id="AAM72851">
    <property type="protein sequence ID" value="AAM72851"/>
    <property type="gene ID" value="CT1626"/>
</dbReference>
<dbReference type="KEGG" id="cte:CT1626"/>
<dbReference type="PATRIC" id="fig|194439.7.peg.1468"/>
<dbReference type="eggNOG" id="COG0509">
    <property type="taxonomic scope" value="Bacteria"/>
</dbReference>
<dbReference type="HOGENOM" id="CLU_097408_2_0_10"/>
<dbReference type="OrthoDB" id="9796712at2"/>
<dbReference type="Proteomes" id="UP000001007">
    <property type="component" value="Chromosome"/>
</dbReference>
<dbReference type="GO" id="GO:0005737">
    <property type="term" value="C:cytoplasm"/>
    <property type="evidence" value="ECO:0007669"/>
    <property type="project" value="TreeGrafter"/>
</dbReference>
<dbReference type="GO" id="GO:0005960">
    <property type="term" value="C:glycine cleavage complex"/>
    <property type="evidence" value="ECO:0007669"/>
    <property type="project" value="InterPro"/>
</dbReference>
<dbReference type="GO" id="GO:0019464">
    <property type="term" value="P:glycine decarboxylation via glycine cleavage system"/>
    <property type="evidence" value="ECO:0007669"/>
    <property type="project" value="UniProtKB-UniRule"/>
</dbReference>
<dbReference type="CDD" id="cd06848">
    <property type="entry name" value="GCS_H"/>
    <property type="match status" value="1"/>
</dbReference>
<dbReference type="Gene3D" id="2.40.50.100">
    <property type="match status" value="1"/>
</dbReference>
<dbReference type="HAMAP" id="MF_00272">
    <property type="entry name" value="GcvH"/>
    <property type="match status" value="1"/>
</dbReference>
<dbReference type="InterPro" id="IPR003016">
    <property type="entry name" value="2-oxoA_DH_lipoyl-BS"/>
</dbReference>
<dbReference type="InterPro" id="IPR000089">
    <property type="entry name" value="Biotin_lipoyl"/>
</dbReference>
<dbReference type="InterPro" id="IPR002930">
    <property type="entry name" value="GCV_H"/>
</dbReference>
<dbReference type="InterPro" id="IPR033753">
    <property type="entry name" value="GCV_H/Fam206"/>
</dbReference>
<dbReference type="InterPro" id="IPR017453">
    <property type="entry name" value="GCV_H_sub"/>
</dbReference>
<dbReference type="InterPro" id="IPR011053">
    <property type="entry name" value="Single_hybrid_motif"/>
</dbReference>
<dbReference type="NCBIfam" id="TIGR00527">
    <property type="entry name" value="gcvH"/>
    <property type="match status" value="1"/>
</dbReference>
<dbReference type="NCBIfam" id="NF002270">
    <property type="entry name" value="PRK01202.1"/>
    <property type="match status" value="1"/>
</dbReference>
<dbReference type="PANTHER" id="PTHR11715">
    <property type="entry name" value="GLYCINE CLEAVAGE SYSTEM H PROTEIN"/>
    <property type="match status" value="1"/>
</dbReference>
<dbReference type="PANTHER" id="PTHR11715:SF3">
    <property type="entry name" value="GLYCINE CLEAVAGE SYSTEM H PROTEIN-RELATED"/>
    <property type="match status" value="1"/>
</dbReference>
<dbReference type="Pfam" id="PF01597">
    <property type="entry name" value="GCV_H"/>
    <property type="match status" value="1"/>
</dbReference>
<dbReference type="SUPFAM" id="SSF51230">
    <property type="entry name" value="Single hybrid motif"/>
    <property type="match status" value="1"/>
</dbReference>
<dbReference type="PROSITE" id="PS50968">
    <property type="entry name" value="BIOTINYL_LIPOYL"/>
    <property type="match status" value="1"/>
</dbReference>
<dbReference type="PROSITE" id="PS00189">
    <property type="entry name" value="LIPOYL"/>
    <property type="match status" value="1"/>
</dbReference>
<accession>Q8KC04</accession>
<comment type="function">
    <text evidence="1">The glycine cleavage system catalyzes the degradation of glycine. The H protein shuttles the methylamine group of glycine from the P protein to the T protein.</text>
</comment>
<comment type="cofactor">
    <cofactor evidence="1">
        <name>(R)-lipoate</name>
        <dbReference type="ChEBI" id="CHEBI:83088"/>
    </cofactor>
    <text evidence="1">Binds 1 lipoyl cofactor covalently.</text>
</comment>
<comment type="subunit">
    <text evidence="1">The glycine cleavage system is composed of four proteins: P, T, L and H.</text>
</comment>
<comment type="similarity">
    <text evidence="1">Belongs to the GcvH family.</text>
</comment>
<reference key="1">
    <citation type="journal article" date="2002" name="Proc. Natl. Acad. Sci. U.S.A.">
        <title>The complete genome sequence of Chlorobium tepidum TLS, a photosynthetic, anaerobic, green-sulfur bacterium.</title>
        <authorList>
            <person name="Eisen J.A."/>
            <person name="Nelson K.E."/>
            <person name="Paulsen I.T."/>
            <person name="Heidelberg J.F."/>
            <person name="Wu M."/>
            <person name="Dodson R.J."/>
            <person name="DeBoy R.T."/>
            <person name="Gwinn M.L."/>
            <person name="Nelson W.C."/>
            <person name="Haft D.H."/>
            <person name="Hickey E.K."/>
            <person name="Peterson J.D."/>
            <person name="Durkin A.S."/>
            <person name="Kolonay J.F."/>
            <person name="Yang F."/>
            <person name="Holt I.E."/>
            <person name="Umayam L.A."/>
            <person name="Mason T.M."/>
            <person name="Brenner M."/>
            <person name="Shea T.P."/>
            <person name="Parksey D.S."/>
            <person name="Nierman W.C."/>
            <person name="Feldblyum T.V."/>
            <person name="Hansen C.L."/>
            <person name="Craven M.B."/>
            <person name="Radune D."/>
            <person name="Vamathevan J.J."/>
            <person name="Khouri H.M."/>
            <person name="White O."/>
            <person name="Gruber T.M."/>
            <person name="Ketchum K.A."/>
            <person name="Venter J.C."/>
            <person name="Tettelin H."/>
            <person name="Bryant D.A."/>
            <person name="Fraser C.M."/>
        </authorList>
    </citation>
    <scope>NUCLEOTIDE SEQUENCE [LARGE SCALE GENOMIC DNA]</scope>
    <source>
        <strain>ATCC 49652 / DSM 12025 / NBRC 103806 / TLS</strain>
    </source>
</reference>